<keyword id="KW-0046">Antibiotic resistance</keyword>
<keyword id="KW-1015">Disulfide bond</keyword>
<keyword id="KW-0378">Hydrolase</keyword>
<keyword id="KW-0614">Plasmid</keyword>
<keyword id="KW-0732">Signal</keyword>
<reference key="1">
    <citation type="journal article" date="2003" name="Antimicrob. Agents Chemother.">
        <title>Carbapenem-resistant strain of Klebsiella oxytoca harboring carbapenem-hydrolyzing beta-lactamase KPC-2.</title>
        <authorList>
            <person name="Yigit H."/>
            <person name="Queenan A.M."/>
            <person name="Rasheed J.K."/>
            <person name="Biddle J.W."/>
            <person name="Domenech-Sanchez A."/>
            <person name="Alberti S."/>
            <person name="Bush K."/>
            <person name="Tenover F.C."/>
        </authorList>
    </citation>
    <scope>NUCLEOTIDE SEQUENCE [GENOMIC DNA]</scope>
    <source>
        <strain>3127</strain>
    </source>
</reference>
<reference key="2">
    <citation type="journal article" date="1991" name="Biochem. J.">
        <title>A standard numbering scheme for the class A beta-lactamases.</title>
        <authorList>
            <person name="Ambler R.P."/>
            <person name="Coulson A.F."/>
            <person name="Frere J.M."/>
            <person name="Ghuysen J.M."/>
            <person name="Joris B."/>
            <person name="Forsman M."/>
            <person name="Levesque R.C."/>
            <person name="Tiraby G."/>
            <person name="Waley S.G."/>
        </authorList>
    </citation>
    <scope>AMINO ACID NUMBERING SCHEME</scope>
</reference>
<protein>
    <recommendedName>
        <fullName>Beta-lactamase SHV-46</fullName>
        <ecNumber>3.5.2.6</ecNumber>
    </recommendedName>
</protein>
<sequence>MRYIRLCIISLLATLPLAVHASPQPLEQIKLSESQLSGRVGMIEMDLASGRTLTAWRADERFPMMSTFKVVLCGAVLARVDAGDEQLERKIHYRQQDLVDYSPVSEKHLADGMTVGELCAAAITMSDNSAANLLLATVGGPAGLTAFLRQIGDNVTRLDRWETELNEALPGDARDTTTPASMAATLRKLLNSQRLSARSQRQLLQWMVDDRVAGPLIRSVLPAGWFIADKTGASKRGARGIVALLGPNNKAERIVVIYLRDTPASMAERNQQIAGIGAALIEHWQR</sequence>
<organism>
    <name type="scientific">Klebsiella oxytoca</name>
    <dbReference type="NCBI Taxonomy" id="571"/>
    <lineage>
        <taxon>Bacteria</taxon>
        <taxon>Pseudomonadati</taxon>
        <taxon>Pseudomonadota</taxon>
        <taxon>Gammaproteobacteria</taxon>
        <taxon>Enterobacterales</taxon>
        <taxon>Enterobacteriaceae</taxon>
        <taxon>Klebsiella/Raoultella group</taxon>
        <taxon>Klebsiella</taxon>
    </lineage>
</organism>
<dbReference type="EC" id="3.5.2.6"/>
<dbReference type="EMBL" id="AY210887">
    <property type="protein sequence ID" value="AAO53445.1"/>
    <property type="molecule type" value="Genomic_DNA"/>
</dbReference>
<dbReference type="RefSeq" id="WP_063864686.1">
    <property type="nucleotide sequence ID" value="NG_050084.1"/>
</dbReference>
<dbReference type="SMR" id="Q848S4"/>
<dbReference type="CARD" id="ARO:3001104">
    <property type="molecule name" value="SHV-46"/>
    <property type="mechanism identifier" value="ARO:0001004"/>
    <property type="mechanism name" value="antibiotic inactivation"/>
</dbReference>
<dbReference type="KEGG" id="ag:AAO53445"/>
<dbReference type="GO" id="GO:0008800">
    <property type="term" value="F:beta-lactamase activity"/>
    <property type="evidence" value="ECO:0007669"/>
    <property type="project" value="UniProtKB-EC"/>
</dbReference>
<dbReference type="GO" id="GO:0030655">
    <property type="term" value="P:beta-lactam antibiotic catabolic process"/>
    <property type="evidence" value="ECO:0007669"/>
    <property type="project" value="InterPro"/>
</dbReference>
<dbReference type="GO" id="GO:0046677">
    <property type="term" value="P:response to antibiotic"/>
    <property type="evidence" value="ECO:0007669"/>
    <property type="project" value="UniProtKB-KW"/>
</dbReference>
<dbReference type="Gene3D" id="3.40.710.10">
    <property type="entry name" value="DD-peptidase/beta-lactamase superfamily"/>
    <property type="match status" value="1"/>
</dbReference>
<dbReference type="InterPro" id="IPR012338">
    <property type="entry name" value="Beta-lactam/transpept-like"/>
</dbReference>
<dbReference type="InterPro" id="IPR045155">
    <property type="entry name" value="Beta-lactam_cat"/>
</dbReference>
<dbReference type="InterPro" id="IPR000871">
    <property type="entry name" value="Beta-lactam_class-A"/>
</dbReference>
<dbReference type="InterPro" id="IPR023650">
    <property type="entry name" value="Beta-lactam_class-A_AS"/>
</dbReference>
<dbReference type="NCBIfam" id="NF033103">
    <property type="entry name" value="bla_class_A"/>
    <property type="match status" value="1"/>
</dbReference>
<dbReference type="NCBIfam" id="NF000285">
    <property type="entry name" value="SHV"/>
    <property type="match status" value="1"/>
</dbReference>
<dbReference type="NCBIfam" id="NF012143">
    <property type="entry name" value="SHV_LEN_OKP"/>
    <property type="match status" value="1"/>
</dbReference>
<dbReference type="PANTHER" id="PTHR35333">
    <property type="entry name" value="BETA-LACTAMASE"/>
    <property type="match status" value="1"/>
</dbReference>
<dbReference type="PANTHER" id="PTHR35333:SF3">
    <property type="entry name" value="BETA-LACTAMASE-TYPE TRANSPEPTIDASE FOLD CONTAINING PROTEIN"/>
    <property type="match status" value="1"/>
</dbReference>
<dbReference type="Pfam" id="PF13354">
    <property type="entry name" value="Beta-lactamase2"/>
    <property type="match status" value="1"/>
</dbReference>
<dbReference type="PRINTS" id="PR00118">
    <property type="entry name" value="BLACTAMASEA"/>
</dbReference>
<dbReference type="SUPFAM" id="SSF56601">
    <property type="entry name" value="beta-lactamase/transpeptidase-like"/>
    <property type="match status" value="1"/>
</dbReference>
<dbReference type="PROSITE" id="PS00146">
    <property type="entry name" value="BETA_LACTAMASE_A"/>
    <property type="match status" value="1"/>
</dbReference>
<gene>
    <name type="primary">bla</name>
    <name type="synonym">shv46</name>
</gene>
<name>BLA46_KLEOX</name>
<comment type="catalytic activity">
    <reaction evidence="3">
        <text>a beta-lactam + H2O = a substituted beta-amino acid</text>
        <dbReference type="Rhea" id="RHEA:20401"/>
        <dbReference type="ChEBI" id="CHEBI:15377"/>
        <dbReference type="ChEBI" id="CHEBI:35627"/>
        <dbReference type="ChEBI" id="CHEBI:140347"/>
        <dbReference type="EC" id="3.5.2.6"/>
    </reaction>
</comment>
<comment type="miscellaneous">
    <text evidence="5">The class A beta-lactamase family has a specific amino-acid numbering system, sometimes called Ambler or ABL numbering and often misspelt as Amber. A multiple sequence alignment was used to derive a consensus sequence and then the consensus was numbered taking into account insertions and deletions. This allows use of identical numbers, e.g. for active site residues, despite differences in protein length. UniProt always uses natural numbering of residues, hence there appear to be differences in numbering between this entry and some papers.</text>
</comment>
<comment type="similarity">
    <text evidence="4">Belongs to the class-A beta-lactamase family.</text>
</comment>
<accession>Q848S4</accession>
<proteinExistence type="inferred from homology"/>
<feature type="signal peptide" evidence="2">
    <location>
        <begin position="1"/>
        <end position="21"/>
    </location>
</feature>
<feature type="chain" id="PRO_0000349142" description="Beta-lactamase SHV-46">
    <location>
        <begin position="22"/>
        <end position="286"/>
    </location>
</feature>
<feature type="active site" description="Acyl-ester intermediate" evidence="3">
    <location>
        <position position="66"/>
    </location>
</feature>
<feature type="active site" description="Proton acceptor" evidence="1">
    <location>
        <position position="164"/>
    </location>
</feature>
<feature type="binding site" evidence="1">
    <location>
        <begin position="230"/>
        <end position="232"/>
    </location>
    <ligand>
        <name>substrate</name>
    </ligand>
</feature>
<feature type="disulfide bond" evidence="1">
    <location>
        <begin position="73"/>
        <end position="119"/>
    </location>
</feature>
<geneLocation type="plasmid">
    <name>conjugative 70kb</name>
</geneLocation>
<evidence type="ECO:0000250" key="1"/>
<evidence type="ECO:0000255" key="2"/>
<evidence type="ECO:0000255" key="3">
    <source>
        <dbReference type="PROSITE-ProRule" id="PRU10101"/>
    </source>
</evidence>
<evidence type="ECO:0000305" key="4"/>
<evidence type="ECO:0000305" key="5">
    <source>
    </source>
</evidence>